<gene>
    <name evidence="1" type="primary">atpH</name>
</gene>
<keyword id="KW-0066">ATP synthesis</keyword>
<keyword id="KW-0138">CF(0)</keyword>
<keyword id="KW-0150">Chloroplast</keyword>
<keyword id="KW-0375">Hydrogen ion transport</keyword>
<keyword id="KW-0406">Ion transport</keyword>
<keyword id="KW-0446">Lipid-binding</keyword>
<keyword id="KW-0472">Membrane</keyword>
<keyword id="KW-0934">Plastid</keyword>
<keyword id="KW-1185">Reference proteome</keyword>
<keyword id="KW-0793">Thylakoid</keyword>
<keyword id="KW-0812">Transmembrane</keyword>
<keyword id="KW-1133">Transmembrane helix</keyword>
<keyword id="KW-0813">Transport</keyword>
<dbReference type="EMBL" id="AP005672">
    <property type="protein sequence ID" value="BAC85068.1"/>
    <property type="molecule type" value="Genomic_DNA"/>
</dbReference>
<dbReference type="RefSeq" id="NP_904218.1">
    <property type="nucleotide sequence ID" value="NC_005087.2"/>
</dbReference>
<dbReference type="RefSeq" id="YP_009477548.1">
    <property type="nucleotide sequence ID" value="NC_037465.1"/>
</dbReference>
<dbReference type="SMR" id="Q6YXK1"/>
<dbReference type="FunCoup" id="Q6YXK1">
    <property type="interactions" value="160"/>
</dbReference>
<dbReference type="STRING" id="3218.Q6YXK1"/>
<dbReference type="GeneID" id="2546804"/>
<dbReference type="GeneID" id="36487182"/>
<dbReference type="KEGG" id="ppp:2546804"/>
<dbReference type="InParanoid" id="Q6YXK1"/>
<dbReference type="OrthoDB" id="438052at2759"/>
<dbReference type="Proteomes" id="UP000006727">
    <property type="component" value="Chloroplast"/>
</dbReference>
<dbReference type="GO" id="GO:0009535">
    <property type="term" value="C:chloroplast thylakoid membrane"/>
    <property type="evidence" value="ECO:0007669"/>
    <property type="project" value="UniProtKB-SubCell"/>
</dbReference>
<dbReference type="GO" id="GO:0045259">
    <property type="term" value="C:proton-transporting ATP synthase complex"/>
    <property type="evidence" value="ECO:0007669"/>
    <property type="project" value="UniProtKB-KW"/>
</dbReference>
<dbReference type="GO" id="GO:0033177">
    <property type="term" value="C:proton-transporting two-sector ATPase complex, proton-transporting domain"/>
    <property type="evidence" value="ECO:0007669"/>
    <property type="project" value="InterPro"/>
</dbReference>
<dbReference type="GO" id="GO:0008289">
    <property type="term" value="F:lipid binding"/>
    <property type="evidence" value="ECO:0007669"/>
    <property type="project" value="UniProtKB-KW"/>
</dbReference>
<dbReference type="GO" id="GO:0046933">
    <property type="term" value="F:proton-transporting ATP synthase activity, rotational mechanism"/>
    <property type="evidence" value="ECO:0007669"/>
    <property type="project" value="UniProtKB-UniRule"/>
</dbReference>
<dbReference type="GO" id="GO:0015986">
    <property type="term" value="P:proton motive force-driven ATP synthesis"/>
    <property type="evidence" value="ECO:0000318"/>
    <property type="project" value="GO_Central"/>
</dbReference>
<dbReference type="CDD" id="cd18183">
    <property type="entry name" value="ATP-synt_Fo_c_ATPH"/>
    <property type="match status" value="1"/>
</dbReference>
<dbReference type="FunFam" id="1.20.20.10:FF:000001">
    <property type="entry name" value="ATP synthase subunit c, chloroplastic"/>
    <property type="match status" value="1"/>
</dbReference>
<dbReference type="Gene3D" id="1.20.20.10">
    <property type="entry name" value="F1F0 ATP synthase subunit C"/>
    <property type="match status" value="1"/>
</dbReference>
<dbReference type="HAMAP" id="MF_01396">
    <property type="entry name" value="ATP_synth_c_bact"/>
    <property type="match status" value="1"/>
</dbReference>
<dbReference type="InterPro" id="IPR005953">
    <property type="entry name" value="ATP_synth_csu_bac/chlpt"/>
</dbReference>
<dbReference type="InterPro" id="IPR000454">
    <property type="entry name" value="ATP_synth_F0_csu"/>
</dbReference>
<dbReference type="InterPro" id="IPR020537">
    <property type="entry name" value="ATP_synth_F0_csu_DDCD_BS"/>
</dbReference>
<dbReference type="InterPro" id="IPR038662">
    <property type="entry name" value="ATP_synth_F0_csu_sf"/>
</dbReference>
<dbReference type="InterPro" id="IPR002379">
    <property type="entry name" value="ATPase_proteolipid_c-like_dom"/>
</dbReference>
<dbReference type="InterPro" id="IPR035921">
    <property type="entry name" value="F/V-ATP_Csub_sf"/>
</dbReference>
<dbReference type="NCBIfam" id="TIGR01260">
    <property type="entry name" value="ATP_synt_c"/>
    <property type="match status" value="1"/>
</dbReference>
<dbReference type="NCBIfam" id="NF005608">
    <property type="entry name" value="PRK07354.1"/>
    <property type="match status" value="1"/>
</dbReference>
<dbReference type="PANTHER" id="PTHR10031">
    <property type="entry name" value="ATP SYNTHASE LIPID-BINDING PROTEIN, MITOCHONDRIAL"/>
    <property type="match status" value="1"/>
</dbReference>
<dbReference type="PANTHER" id="PTHR10031:SF0">
    <property type="entry name" value="ATPASE PROTEIN 9"/>
    <property type="match status" value="1"/>
</dbReference>
<dbReference type="Pfam" id="PF00137">
    <property type="entry name" value="ATP-synt_C"/>
    <property type="match status" value="1"/>
</dbReference>
<dbReference type="PRINTS" id="PR00124">
    <property type="entry name" value="ATPASEC"/>
</dbReference>
<dbReference type="SUPFAM" id="SSF81333">
    <property type="entry name" value="F1F0 ATP synthase subunit C"/>
    <property type="match status" value="1"/>
</dbReference>
<dbReference type="PROSITE" id="PS00605">
    <property type="entry name" value="ATPASE_C"/>
    <property type="match status" value="1"/>
</dbReference>
<geneLocation type="chloroplast"/>
<evidence type="ECO:0000255" key="1">
    <source>
        <dbReference type="HAMAP-Rule" id="MF_01396"/>
    </source>
</evidence>
<name>ATPH_PHYPA</name>
<comment type="function">
    <text evidence="1">F(1)F(0) ATP synthase produces ATP from ADP in the presence of a proton or sodium gradient. F-type ATPases consist of two structural domains, F(1) containing the extramembraneous catalytic core and F(0) containing the membrane proton channel, linked together by a central stalk and a peripheral stalk. During catalysis, ATP synthesis in the catalytic domain of F(1) is coupled via a rotary mechanism of the central stalk subunits to proton translocation.</text>
</comment>
<comment type="function">
    <text evidence="1">Key component of the F(0) channel; it plays a direct role in translocation across the membrane. A homomeric c-ring of between 10-14 subunits forms the central stalk rotor element with the F(1) delta and epsilon subunits.</text>
</comment>
<comment type="subunit">
    <text evidence="1">F-type ATPases have 2 components, F(1) - the catalytic core - and F(0) - the membrane proton channel. F(1) has five subunits: alpha(3), beta(3), gamma(1), delta(1), epsilon(1). F(0) has four main subunits: a(1), b(1), b'(1) and c(10-14). The alpha and beta chains form an alternating ring which encloses part of the gamma chain. F(1) is attached to F(0) by a central stalk formed by the gamma and epsilon chains, while a peripheral stalk is formed by the delta, b and b' chains.</text>
</comment>
<comment type="subcellular location">
    <subcellularLocation>
        <location evidence="1">Plastid</location>
        <location evidence="1">Chloroplast thylakoid membrane</location>
        <topology evidence="1">Multi-pass membrane protein</topology>
    </subcellularLocation>
</comment>
<comment type="miscellaneous">
    <text>In plastids the F-type ATPase is also known as CF(1)CF(0).</text>
</comment>
<comment type="similarity">
    <text evidence="1">Belongs to the ATPase C chain family.</text>
</comment>
<protein>
    <recommendedName>
        <fullName evidence="1">ATP synthase subunit c, chloroplastic</fullName>
    </recommendedName>
    <alternativeName>
        <fullName evidence="1">ATP synthase F(0) sector subunit c</fullName>
    </alternativeName>
    <alternativeName>
        <fullName evidence="1">ATPase subunit III</fullName>
    </alternativeName>
    <alternativeName>
        <fullName evidence="1">F-type ATPase subunit c</fullName>
        <shortName evidence="1">F-ATPase subunit c</shortName>
    </alternativeName>
    <alternativeName>
        <fullName evidence="1">Lipid-binding protein</fullName>
    </alternativeName>
</protein>
<feature type="chain" id="PRO_0000362954" description="ATP synthase subunit c, chloroplastic">
    <location>
        <begin position="1"/>
        <end position="81"/>
    </location>
</feature>
<feature type="transmembrane region" description="Helical" evidence="1">
    <location>
        <begin position="7"/>
        <end position="27"/>
    </location>
</feature>
<feature type="transmembrane region" description="Helical" evidence="1">
    <location>
        <begin position="57"/>
        <end position="77"/>
    </location>
</feature>
<feature type="site" description="Reversibly protonated during proton transport" evidence="1">
    <location>
        <position position="61"/>
    </location>
</feature>
<proteinExistence type="inferred from homology"/>
<sequence length="81" mass="8004">MNPLISAASVIAAGLAVGLASIGPGIGQGTAAGQAVEGIARQPEAEGKIRGTLLLSLAFMEALTIYGLVVALALLFANPFV</sequence>
<organism>
    <name type="scientific">Physcomitrium patens</name>
    <name type="common">Spreading-leaved earth moss</name>
    <name type="synonym">Physcomitrella patens</name>
    <dbReference type="NCBI Taxonomy" id="3218"/>
    <lineage>
        <taxon>Eukaryota</taxon>
        <taxon>Viridiplantae</taxon>
        <taxon>Streptophyta</taxon>
        <taxon>Embryophyta</taxon>
        <taxon>Bryophyta</taxon>
        <taxon>Bryophytina</taxon>
        <taxon>Bryopsida</taxon>
        <taxon>Funariidae</taxon>
        <taxon>Funariales</taxon>
        <taxon>Funariaceae</taxon>
        <taxon>Physcomitrium</taxon>
    </lineage>
</organism>
<accession>Q6YXK1</accession>
<reference key="1">
    <citation type="journal article" date="2003" name="Nucleic Acids Res.">
        <title>Complete chloroplast DNA sequence of the moss Physcomitrella patens: evidence for the loss and relocation of rpoA from the chloroplast to the nucleus.</title>
        <authorList>
            <person name="Sugiura C."/>
            <person name="Kobayashi Y."/>
            <person name="Setsuyuki A."/>
            <person name="Sugita C."/>
            <person name="Sugita M."/>
        </authorList>
    </citation>
    <scope>NUCLEOTIDE SEQUENCE [LARGE SCALE GENOMIC DNA]</scope>
    <source>
        <strain>cv. Gransden 2004</strain>
    </source>
</reference>